<proteinExistence type="inferred from homology"/>
<evidence type="ECO:0000255" key="1">
    <source>
        <dbReference type="HAMAP-Rule" id="MF_00076"/>
    </source>
</evidence>
<protein>
    <recommendedName>
        <fullName evidence="1">Imidazoleglycerol-phosphate dehydratase</fullName>
        <shortName evidence="1">IGPD</shortName>
        <ecNumber evidence="1">4.2.1.19</ecNumber>
    </recommendedName>
</protein>
<keyword id="KW-0028">Amino-acid biosynthesis</keyword>
<keyword id="KW-0963">Cytoplasm</keyword>
<keyword id="KW-0368">Histidine biosynthesis</keyword>
<keyword id="KW-0456">Lyase</keyword>
<gene>
    <name evidence="1" type="primary">hisB</name>
    <name type="ordered locus">LMOf2365_0595</name>
</gene>
<feature type="chain" id="PRO_0000158140" description="Imidazoleglycerol-phosphate dehydratase">
    <location>
        <begin position="1"/>
        <end position="194"/>
    </location>
</feature>
<name>HIS7_LISMF</name>
<sequence>MRTATKTRITAETSIELSINLDSQAESIISTGVGFLDHMLTLFAKHSRITLNVKADGDTYIDAHHTVEDIGITLGLCLKEALADKASINRYGSAYVPMDESLGFCALDLSGRSYLVFDAELTNPKLGDFDTELVEEFFQAVAFNTEMNLHLRVLYGKNTHHKIEALFKAFGRALREAITINPEIKGVNSTKGVL</sequence>
<dbReference type="EC" id="4.2.1.19" evidence="1"/>
<dbReference type="EMBL" id="AE017262">
    <property type="protein sequence ID" value="AAT03377.1"/>
    <property type="molecule type" value="Genomic_DNA"/>
</dbReference>
<dbReference type="RefSeq" id="WP_003725468.1">
    <property type="nucleotide sequence ID" value="NC_002973.6"/>
</dbReference>
<dbReference type="SMR" id="Q722Y4"/>
<dbReference type="KEGG" id="lmf:LMOf2365_0595"/>
<dbReference type="HOGENOM" id="CLU_044308_3_0_9"/>
<dbReference type="UniPathway" id="UPA00031">
    <property type="reaction ID" value="UER00011"/>
</dbReference>
<dbReference type="GO" id="GO:0005737">
    <property type="term" value="C:cytoplasm"/>
    <property type="evidence" value="ECO:0007669"/>
    <property type="project" value="UniProtKB-SubCell"/>
</dbReference>
<dbReference type="GO" id="GO:0004424">
    <property type="term" value="F:imidazoleglycerol-phosphate dehydratase activity"/>
    <property type="evidence" value="ECO:0007669"/>
    <property type="project" value="UniProtKB-UniRule"/>
</dbReference>
<dbReference type="GO" id="GO:0000105">
    <property type="term" value="P:L-histidine biosynthetic process"/>
    <property type="evidence" value="ECO:0007669"/>
    <property type="project" value="UniProtKB-UniRule"/>
</dbReference>
<dbReference type="CDD" id="cd07914">
    <property type="entry name" value="IGPD"/>
    <property type="match status" value="1"/>
</dbReference>
<dbReference type="FunFam" id="3.30.230.40:FF:000001">
    <property type="entry name" value="Imidazoleglycerol-phosphate dehydratase HisB"/>
    <property type="match status" value="1"/>
</dbReference>
<dbReference type="FunFam" id="3.30.230.40:FF:000003">
    <property type="entry name" value="Imidazoleglycerol-phosphate dehydratase HisB"/>
    <property type="match status" value="1"/>
</dbReference>
<dbReference type="Gene3D" id="3.30.230.40">
    <property type="entry name" value="Imidazole glycerol phosphate dehydratase, domain 1"/>
    <property type="match status" value="2"/>
</dbReference>
<dbReference type="HAMAP" id="MF_00076">
    <property type="entry name" value="HisB"/>
    <property type="match status" value="1"/>
</dbReference>
<dbReference type="InterPro" id="IPR038494">
    <property type="entry name" value="IGPD_sf"/>
</dbReference>
<dbReference type="InterPro" id="IPR000807">
    <property type="entry name" value="ImidazoleglycerolP_deHydtase"/>
</dbReference>
<dbReference type="InterPro" id="IPR020565">
    <property type="entry name" value="ImidazoleglycerP_deHydtase_CS"/>
</dbReference>
<dbReference type="InterPro" id="IPR020568">
    <property type="entry name" value="Ribosomal_Su5_D2-typ_SF"/>
</dbReference>
<dbReference type="NCBIfam" id="NF002107">
    <property type="entry name" value="PRK00951.1-2"/>
    <property type="match status" value="1"/>
</dbReference>
<dbReference type="NCBIfam" id="NF002111">
    <property type="entry name" value="PRK00951.2-1"/>
    <property type="match status" value="1"/>
</dbReference>
<dbReference type="NCBIfam" id="NF002114">
    <property type="entry name" value="PRK00951.2-4"/>
    <property type="match status" value="1"/>
</dbReference>
<dbReference type="PANTHER" id="PTHR23133:SF2">
    <property type="entry name" value="IMIDAZOLEGLYCEROL-PHOSPHATE DEHYDRATASE"/>
    <property type="match status" value="1"/>
</dbReference>
<dbReference type="PANTHER" id="PTHR23133">
    <property type="entry name" value="IMIDAZOLEGLYCEROL-PHOSPHATE DEHYDRATASE HIS7"/>
    <property type="match status" value="1"/>
</dbReference>
<dbReference type="Pfam" id="PF00475">
    <property type="entry name" value="IGPD"/>
    <property type="match status" value="1"/>
</dbReference>
<dbReference type="SUPFAM" id="SSF54211">
    <property type="entry name" value="Ribosomal protein S5 domain 2-like"/>
    <property type="match status" value="2"/>
</dbReference>
<dbReference type="PROSITE" id="PS00954">
    <property type="entry name" value="IGP_DEHYDRATASE_1"/>
    <property type="match status" value="1"/>
</dbReference>
<dbReference type="PROSITE" id="PS00955">
    <property type="entry name" value="IGP_DEHYDRATASE_2"/>
    <property type="match status" value="1"/>
</dbReference>
<reference key="1">
    <citation type="journal article" date="2004" name="Nucleic Acids Res.">
        <title>Whole genome comparisons of serotype 4b and 1/2a strains of the food-borne pathogen Listeria monocytogenes reveal new insights into the core genome components of this species.</title>
        <authorList>
            <person name="Nelson K.E."/>
            <person name="Fouts D.E."/>
            <person name="Mongodin E.F."/>
            <person name="Ravel J."/>
            <person name="DeBoy R.T."/>
            <person name="Kolonay J.F."/>
            <person name="Rasko D.A."/>
            <person name="Angiuoli S.V."/>
            <person name="Gill S.R."/>
            <person name="Paulsen I.T."/>
            <person name="Peterson J.D."/>
            <person name="White O."/>
            <person name="Nelson W.C."/>
            <person name="Nierman W.C."/>
            <person name="Beanan M.J."/>
            <person name="Brinkac L.M."/>
            <person name="Daugherty S.C."/>
            <person name="Dodson R.J."/>
            <person name="Durkin A.S."/>
            <person name="Madupu R."/>
            <person name="Haft D.H."/>
            <person name="Selengut J."/>
            <person name="Van Aken S.E."/>
            <person name="Khouri H.M."/>
            <person name="Fedorova N."/>
            <person name="Forberger H.A."/>
            <person name="Tran B."/>
            <person name="Kathariou S."/>
            <person name="Wonderling L.D."/>
            <person name="Uhlich G.A."/>
            <person name="Bayles D.O."/>
            <person name="Luchansky J.B."/>
            <person name="Fraser C.M."/>
        </authorList>
    </citation>
    <scope>NUCLEOTIDE SEQUENCE [LARGE SCALE GENOMIC DNA]</scope>
    <source>
        <strain>F2365</strain>
    </source>
</reference>
<organism>
    <name type="scientific">Listeria monocytogenes serotype 4b (strain F2365)</name>
    <dbReference type="NCBI Taxonomy" id="265669"/>
    <lineage>
        <taxon>Bacteria</taxon>
        <taxon>Bacillati</taxon>
        <taxon>Bacillota</taxon>
        <taxon>Bacilli</taxon>
        <taxon>Bacillales</taxon>
        <taxon>Listeriaceae</taxon>
        <taxon>Listeria</taxon>
    </lineage>
</organism>
<comment type="catalytic activity">
    <reaction evidence="1">
        <text>D-erythro-1-(imidazol-4-yl)glycerol 3-phosphate = 3-(imidazol-4-yl)-2-oxopropyl phosphate + H2O</text>
        <dbReference type="Rhea" id="RHEA:11040"/>
        <dbReference type="ChEBI" id="CHEBI:15377"/>
        <dbReference type="ChEBI" id="CHEBI:57766"/>
        <dbReference type="ChEBI" id="CHEBI:58278"/>
        <dbReference type="EC" id="4.2.1.19"/>
    </reaction>
</comment>
<comment type="pathway">
    <text evidence="1">Amino-acid biosynthesis; L-histidine biosynthesis; L-histidine from 5-phospho-alpha-D-ribose 1-diphosphate: step 6/9.</text>
</comment>
<comment type="subcellular location">
    <subcellularLocation>
        <location evidence="1">Cytoplasm</location>
    </subcellularLocation>
</comment>
<comment type="similarity">
    <text evidence="1">Belongs to the imidazoleglycerol-phosphate dehydratase family.</text>
</comment>
<accession>Q722Y4</accession>